<feature type="signal peptide" evidence="3">
    <location>
        <begin position="1"/>
        <end position="21"/>
    </location>
</feature>
<feature type="chain" id="PRO_0000221543" description="DELTA-alicitoxin-Pse2b">
    <location>
        <begin position="22"/>
        <end position="488"/>
    </location>
</feature>
<feature type="domain" description="MACPF" evidence="2">
    <location>
        <begin position="24"/>
        <end position="344"/>
    </location>
</feature>
<feature type="domain" description="EGF-like">
    <location>
        <begin position="369"/>
        <end position="398"/>
    </location>
</feature>
<feature type="disulfide bond" evidence="1">
    <location>
        <begin position="370"/>
        <end position="383"/>
    </location>
</feature>
<feature type="disulfide bond" evidence="1">
    <location>
        <begin position="377"/>
        <end position="391"/>
    </location>
</feature>
<feature type="disulfide bond" evidence="1">
    <location>
        <begin position="393"/>
        <end position="398"/>
    </location>
</feature>
<sequence length="488" mass="54461">MSKPIIFLLTAFVVLTDLGATEDTEKVEVKAKPSKTSRGAIGQGFELHKIDLLSKELQGTGAQVFEELPVEECTTDNKLGTIQKDDTFYSNTESLYNSVASNSKIEPSLKGPFTLGTSVGAVTNNIVSEKSEIQGLSLNLKAYSMIHALKQDCINKKPLAKDLVSDFEALDREVKKPWLKPSWRKYKVFLEKFGTHIVRETMSGSSIYQYVFAKSSESFKQRDFKIKACLSLGGPTQVGKLGISACSDVSKKDVEESSGKEMVKKLVVRGGKSDTRVDLTGELSKNQINKFLKEATTDPSPIQYTFYPVWTILKARYIGKEHYAKATNLEQFYKGYLNFDCAYEKSEKGLELQKFELAEDSDPDAPTYVCKLGPEGCHSDDDCESDDLIYCACCGDSCIRYNNTVLLSTGDTKKVAFINDVDDEFRDHGCGRKGLKCKCKEENKKWGQSWSGDSDADAALRDINAMMLDQNRRDQAKRHHVKKGKSLH</sequence>
<proteinExistence type="evidence at protein level"/>
<dbReference type="EMBL" id="AB201429">
    <property type="protein sequence ID" value="BAF46273.1"/>
    <property type="molecule type" value="mRNA"/>
</dbReference>
<dbReference type="TCDB" id="1.C.39.10.2">
    <property type="family name" value="the membrane attack complex/perforin (macpf) family"/>
</dbReference>
<dbReference type="GO" id="GO:0005576">
    <property type="term" value="C:extracellular region"/>
    <property type="evidence" value="ECO:0007669"/>
    <property type="project" value="UniProtKB-SubCell"/>
</dbReference>
<dbReference type="GO" id="GO:0042151">
    <property type="term" value="C:nematocyst"/>
    <property type="evidence" value="ECO:0007669"/>
    <property type="project" value="UniProtKB-SubCell"/>
</dbReference>
<dbReference type="GO" id="GO:0090729">
    <property type="term" value="F:toxin activity"/>
    <property type="evidence" value="ECO:0007669"/>
    <property type="project" value="UniProtKB-KW"/>
</dbReference>
<dbReference type="GO" id="GO:0031640">
    <property type="term" value="P:killing of cells of another organism"/>
    <property type="evidence" value="ECO:0007669"/>
    <property type="project" value="UniProtKB-KW"/>
</dbReference>
<dbReference type="InterPro" id="IPR020864">
    <property type="entry name" value="MACPF"/>
</dbReference>
<dbReference type="PANTHER" id="PTHR45742">
    <property type="entry name" value="COMPLEMENT COMPONENT C6"/>
    <property type="match status" value="1"/>
</dbReference>
<dbReference type="PANTHER" id="PTHR45742:SF8">
    <property type="entry name" value="FLOCCULATION PROTEIN FLO11"/>
    <property type="match status" value="1"/>
</dbReference>
<dbReference type="Pfam" id="PF01823">
    <property type="entry name" value="MACPF"/>
    <property type="match status" value="1"/>
</dbReference>
<dbReference type="PROSITE" id="PS51412">
    <property type="entry name" value="MACPF_2"/>
    <property type="match status" value="1"/>
</dbReference>
<keyword id="KW-0204">Cytolysis</keyword>
<keyword id="KW-0903">Direct protein sequencing</keyword>
<keyword id="KW-1015">Disulfide bond</keyword>
<keyword id="KW-0354">Hemolysis</keyword>
<keyword id="KW-0166">Nematocyst</keyword>
<keyword id="KW-0964">Secreted</keyword>
<keyword id="KW-0732">Signal</keyword>
<keyword id="KW-0800">Toxin</keyword>
<comment type="function">
    <text evidence="3">Causes lethal toxicity to the shrimp Palaemon paucidence, and hemolytic activity toward sheep red blood cells.</text>
</comment>
<comment type="subcellular location">
    <subcellularLocation>
        <location>Secreted</location>
    </subcellularLocation>
    <subcellularLocation>
        <location>Nematocyst</location>
    </subcellularLocation>
</comment>
<protein>
    <recommendedName>
        <fullName evidence="5">DELTA-alicitoxin-Pse2b</fullName>
        <shortName evidence="5">DELTA-ALTX-Pse2b</shortName>
    </recommendedName>
    <alternativeName>
        <fullName evidence="4">Toxin PsTX-60B</fullName>
        <shortName>PTX60B</shortName>
    </alternativeName>
</protein>
<organism>
    <name type="scientific">Phyllodiscus semoni</name>
    <name type="common">Night anemone</name>
    <dbReference type="NCBI Taxonomy" id="163701"/>
    <lineage>
        <taxon>Eukaryota</taxon>
        <taxon>Metazoa</taxon>
        <taxon>Cnidaria</taxon>
        <taxon>Anthozoa</taxon>
        <taxon>Hexacorallia</taxon>
        <taxon>Actiniaria</taxon>
        <taxon>Nynantheae</taxon>
        <taxon>Aliciidae</taxon>
        <taxon>Phyllodiscus</taxon>
    </lineage>
</organism>
<reference key="1">
    <citation type="journal article" date="2007" name="Toxicon">
        <title>Characterization of PsTX-60B, a new membrane-attack complex/perforin (MACPF) family toxin, from the venomous sea anemone Phyllodiscus semoni.</title>
        <authorList>
            <person name="Satoh H."/>
            <person name="Oshiro N."/>
            <person name="Iwanaga S."/>
            <person name="Namikoshi M."/>
            <person name="Nagai H."/>
        </authorList>
    </citation>
    <scope>NUCLEOTIDE SEQUENCE [MRNA]</scope>
</reference>
<reference key="2">
    <citation type="journal article" date="2002" name="Biochem. Biophys. Res. Commun.">
        <title>Novel proteinaceous toxins from the nematocyst venom of the Okinawan sea anemone Phyllodiscus semoni Kwietniewski.</title>
        <authorList>
            <person name="Nagai H."/>
            <person name="Oshiro N."/>
            <person name="Takuwa-Kuroda K."/>
            <person name="Iwanaga S."/>
            <person name="Nozaki M."/>
            <person name="Nakajima T."/>
        </authorList>
    </citation>
    <scope>PROTEIN SEQUENCE OF 22-45</scope>
    <scope>FUNCTION</scope>
    <source>
        <tissue>Nematoblast</tissue>
    </source>
</reference>
<reference key="3">
    <citation type="journal article" date="2012" name="Toxicon">
        <title>Development of a rational nomenclature for naming peptide and protein toxins from sea anemones.</title>
        <authorList>
            <person name="Oliveira J.S."/>
            <person name="Fuentes-Silva D."/>
            <person name="King G.F."/>
        </authorList>
    </citation>
    <scope>NOMENCLATURE</scope>
</reference>
<name>TX60B_PHYSE</name>
<evidence type="ECO:0000250" key="1"/>
<evidence type="ECO:0000255" key="2">
    <source>
        <dbReference type="PROSITE-ProRule" id="PRU00745"/>
    </source>
</evidence>
<evidence type="ECO:0000269" key="3">
    <source>
    </source>
</evidence>
<evidence type="ECO:0000303" key="4">
    <source>
    </source>
</evidence>
<evidence type="ECO:0000303" key="5">
    <source>
    </source>
</evidence>
<accession>P58912</accession>
<accession>A2PYH2</accession>